<gene>
    <name type="primary">Orc1</name>
    <name type="ORF">CG10667</name>
</gene>
<name>ORC1_DROME</name>
<reference key="1">
    <citation type="journal article" date="1997" name="Cell">
        <title>Association of the origin recognition complex with heterochromatin and HP1 in higher eukaryotes.</title>
        <authorList>
            <person name="Pak D.T.S."/>
            <person name="Pflumm M."/>
            <person name="Chesnokov I."/>
            <person name="Huang D.W."/>
            <person name="Kellum R."/>
            <person name="Marr J."/>
            <person name="Romanowski P."/>
            <person name="Botchan M.R."/>
        </authorList>
    </citation>
    <scope>NUCLEOTIDE SEQUENCE [MRNA]</scope>
    <scope>FUNCTION</scope>
</reference>
<reference key="2">
    <citation type="journal article" date="2000" name="Science">
        <title>The genome sequence of Drosophila melanogaster.</title>
        <authorList>
            <person name="Adams M.D."/>
            <person name="Celniker S.E."/>
            <person name="Holt R.A."/>
            <person name="Evans C.A."/>
            <person name="Gocayne J.D."/>
            <person name="Amanatides P.G."/>
            <person name="Scherer S.E."/>
            <person name="Li P.W."/>
            <person name="Hoskins R.A."/>
            <person name="Galle R.F."/>
            <person name="George R.A."/>
            <person name="Lewis S.E."/>
            <person name="Richards S."/>
            <person name="Ashburner M."/>
            <person name="Henderson S.N."/>
            <person name="Sutton G.G."/>
            <person name="Wortman J.R."/>
            <person name="Yandell M.D."/>
            <person name="Zhang Q."/>
            <person name="Chen L.X."/>
            <person name="Brandon R.C."/>
            <person name="Rogers Y.-H.C."/>
            <person name="Blazej R.G."/>
            <person name="Champe M."/>
            <person name="Pfeiffer B.D."/>
            <person name="Wan K.H."/>
            <person name="Doyle C."/>
            <person name="Baxter E.G."/>
            <person name="Helt G."/>
            <person name="Nelson C.R."/>
            <person name="Miklos G.L.G."/>
            <person name="Abril J.F."/>
            <person name="Agbayani A."/>
            <person name="An H.-J."/>
            <person name="Andrews-Pfannkoch C."/>
            <person name="Baldwin D."/>
            <person name="Ballew R.M."/>
            <person name="Basu A."/>
            <person name="Baxendale J."/>
            <person name="Bayraktaroglu L."/>
            <person name="Beasley E.M."/>
            <person name="Beeson K.Y."/>
            <person name="Benos P.V."/>
            <person name="Berman B.P."/>
            <person name="Bhandari D."/>
            <person name="Bolshakov S."/>
            <person name="Borkova D."/>
            <person name="Botchan M.R."/>
            <person name="Bouck J."/>
            <person name="Brokstein P."/>
            <person name="Brottier P."/>
            <person name="Burtis K.C."/>
            <person name="Busam D.A."/>
            <person name="Butler H."/>
            <person name="Cadieu E."/>
            <person name="Center A."/>
            <person name="Chandra I."/>
            <person name="Cherry J.M."/>
            <person name="Cawley S."/>
            <person name="Dahlke C."/>
            <person name="Davenport L.B."/>
            <person name="Davies P."/>
            <person name="de Pablos B."/>
            <person name="Delcher A."/>
            <person name="Deng Z."/>
            <person name="Mays A.D."/>
            <person name="Dew I."/>
            <person name="Dietz S.M."/>
            <person name="Dodson K."/>
            <person name="Doup L.E."/>
            <person name="Downes M."/>
            <person name="Dugan-Rocha S."/>
            <person name="Dunkov B.C."/>
            <person name="Dunn P."/>
            <person name="Durbin K.J."/>
            <person name="Evangelista C.C."/>
            <person name="Ferraz C."/>
            <person name="Ferriera S."/>
            <person name="Fleischmann W."/>
            <person name="Fosler C."/>
            <person name="Gabrielian A.E."/>
            <person name="Garg N.S."/>
            <person name="Gelbart W.M."/>
            <person name="Glasser K."/>
            <person name="Glodek A."/>
            <person name="Gong F."/>
            <person name="Gorrell J.H."/>
            <person name="Gu Z."/>
            <person name="Guan P."/>
            <person name="Harris M."/>
            <person name="Harris N.L."/>
            <person name="Harvey D.A."/>
            <person name="Heiman T.J."/>
            <person name="Hernandez J.R."/>
            <person name="Houck J."/>
            <person name="Hostin D."/>
            <person name="Houston K.A."/>
            <person name="Howland T.J."/>
            <person name="Wei M.-H."/>
            <person name="Ibegwam C."/>
            <person name="Jalali M."/>
            <person name="Kalush F."/>
            <person name="Karpen G.H."/>
            <person name="Ke Z."/>
            <person name="Kennison J.A."/>
            <person name="Ketchum K.A."/>
            <person name="Kimmel B.E."/>
            <person name="Kodira C.D."/>
            <person name="Kraft C.L."/>
            <person name="Kravitz S."/>
            <person name="Kulp D."/>
            <person name="Lai Z."/>
            <person name="Lasko P."/>
            <person name="Lei Y."/>
            <person name="Levitsky A.A."/>
            <person name="Li J.H."/>
            <person name="Li Z."/>
            <person name="Liang Y."/>
            <person name="Lin X."/>
            <person name="Liu X."/>
            <person name="Mattei B."/>
            <person name="McIntosh T.C."/>
            <person name="McLeod M.P."/>
            <person name="McPherson D."/>
            <person name="Merkulov G."/>
            <person name="Milshina N.V."/>
            <person name="Mobarry C."/>
            <person name="Morris J."/>
            <person name="Moshrefi A."/>
            <person name="Mount S.M."/>
            <person name="Moy M."/>
            <person name="Murphy B."/>
            <person name="Murphy L."/>
            <person name="Muzny D.M."/>
            <person name="Nelson D.L."/>
            <person name="Nelson D.R."/>
            <person name="Nelson K.A."/>
            <person name="Nixon K."/>
            <person name="Nusskern D.R."/>
            <person name="Pacleb J.M."/>
            <person name="Palazzolo M."/>
            <person name="Pittman G.S."/>
            <person name="Pan S."/>
            <person name="Pollard J."/>
            <person name="Puri V."/>
            <person name="Reese M.G."/>
            <person name="Reinert K."/>
            <person name="Remington K."/>
            <person name="Saunders R.D.C."/>
            <person name="Scheeler F."/>
            <person name="Shen H."/>
            <person name="Shue B.C."/>
            <person name="Siden-Kiamos I."/>
            <person name="Simpson M."/>
            <person name="Skupski M.P."/>
            <person name="Smith T.J."/>
            <person name="Spier E."/>
            <person name="Spradling A.C."/>
            <person name="Stapleton M."/>
            <person name="Strong R."/>
            <person name="Sun E."/>
            <person name="Svirskas R."/>
            <person name="Tector C."/>
            <person name="Turner R."/>
            <person name="Venter E."/>
            <person name="Wang A.H."/>
            <person name="Wang X."/>
            <person name="Wang Z.-Y."/>
            <person name="Wassarman D.A."/>
            <person name="Weinstock G.M."/>
            <person name="Weissenbach J."/>
            <person name="Williams S.M."/>
            <person name="Woodage T."/>
            <person name="Worley K.C."/>
            <person name="Wu D."/>
            <person name="Yang S."/>
            <person name="Yao Q.A."/>
            <person name="Ye J."/>
            <person name="Yeh R.-F."/>
            <person name="Zaveri J.S."/>
            <person name="Zhan M."/>
            <person name="Zhang G."/>
            <person name="Zhao Q."/>
            <person name="Zheng L."/>
            <person name="Zheng X.H."/>
            <person name="Zhong F.N."/>
            <person name="Zhong W."/>
            <person name="Zhou X."/>
            <person name="Zhu S.C."/>
            <person name="Zhu X."/>
            <person name="Smith H.O."/>
            <person name="Gibbs R.A."/>
            <person name="Myers E.W."/>
            <person name="Rubin G.M."/>
            <person name="Venter J.C."/>
        </authorList>
    </citation>
    <scope>NUCLEOTIDE SEQUENCE [LARGE SCALE GENOMIC DNA]</scope>
    <source>
        <strain>Berkeley</strain>
    </source>
</reference>
<reference key="3">
    <citation type="journal article" date="2002" name="Genome Biol.">
        <title>Annotation of the Drosophila melanogaster euchromatic genome: a systematic review.</title>
        <authorList>
            <person name="Misra S."/>
            <person name="Crosby M.A."/>
            <person name="Mungall C.J."/>
            <person name="Matthews B.B."/>
            <person name="Campbell K.S."/>
            <person name="Hradecky P."/>
            <person name="Huang Y."/>
            <person name="Kaminker J.S."/>
            <person name="Millburn G.H."/>
            <person name="Prochnik S.E."/>
            <person name="Smith C.D."/>
            <person name="Tupy J.L."/>
            <person name="Whitfield E.J."/>
            <person name="Bayraktaroglu L."/>
            <person name="Berman B.P."/>
            <person name="Bettencourt B.R."/>
            <person name="Celniker S.E."/>
            <person name="de Grey A.D.N.J."/>
            <person name="Drysdale R.A."/>
            <person name="Harris N.L."/>
            <person name="Richter J."/>
            <person name="Russo S."/>
            <person name="Schroeder A.J."/>
            <person name="Shu S.Q."/>
            <person name="Stapleton M."/>
            <person name="Yamada C."/>
            <person name="Ashburner M."/>
            <person name="Gelbart W.M."/>
            <person name="Rubin G.M."/>
            <person name="Lewis S.E."/>
        </authorList>
    </citation>
    <scope>GENOME REANNOTATION</scope>
    <source>
        <strain>Berkeley</strain>
    </source>
</reference>
<reference key="4">
    <citation type="journal article" date="2002" name="Genome Biol.">
        <title>A Drosophila full-length cDNA resource.</title>
        <authorList>
            <person name="Stapleton M."/>
            <person name="Carlson J.W."/>
            <person name="Brokstein P."/>
            <person name="Yu C."/>
            <person name="Champe M."/>
            <person name="George R.A."/>
            <person name="Guarin H."/>
            <person name="Kronmiller B."/>
            <person name="Pacleb J.M."/>
            <person name="Park S."/>
            <person name="Wan K.H."/>
            <person name="Rubin G.M."/>
            <person name="Celniker S.E."/>
        </authorList>
    </citation>
    <scope>NUCLEOTIDE SEQUENCE [LARGE SCALE MRNA]</scope>
    <source>
        <strain>Berkeley</strain>
        <tissue>Embryo</tissue>
    </source>
</reference>
<reference key="5">
    <citation type="journal article" date="2007" name="Mol. Biosyst.">
        <title>An integrated chemical, mass spectrometric and computational strategy for (quantitative) phosphoproteomics: application to Drosophila melanogaster Kc167 cells.</title>
        <authorList>
            <person name="Bodenmiller B."/>
            <person name="Mueller L.N."/>
            <person name="Pedrioli P.G.A."/>
            <person name="Pflieger D."/>
            <person name="Juenger M.A."/>
            <person name="Eng J.K."/>
            <person name="Aebersold R."/>
            <person name="Tao W.A."/>
        </authorList>
    </citation>
    <scope>PHOSPHORYLATION [LARGE SCALE ANALYSIS] AT SER-368</scope>
    <scope>IDENTIFICATION BY MASS SPECTROMETRY</scope>
</reference>
<reference key="6">
    <citation type="journal article" date="2008" name="J. Proteome Res.">
        <title>Phosphoproteome analysis of Drosophila melanogaster embryos.</title>
        <authorList>
            <person name="Zhai B."/>
            <person name="Villen J."/>
            <person name="Beausoleil S.A."/>
            <person name="Mintseris J."/>
            <person name="Gygi S.P."/>
        </authorList>
    </citation>
    <scope>PHOSPHORYLATION [LARGE SCALE ANALYSIS] AT SER-293; THR-419; SER-426; SER-430 AND SER-533</scope>
    <scope>IDENTIFICATION BY MASS SPECTROMETRY</scope>
    <source>
        <tissue>Embryo</tissue>
    </source>
</reference>
<protein>
    <recommendedName>
        <fullName>Origin recognition complex subunit 1</fullName>
        <shortName>DmORC1</shortName>
    </recommendedName>
</protein>
<organism>
    <name type="scientific">Drosophila melanogaster</name>
    <name type="common">Fruit fly</name>
    <dbReference type="NCBI Taxonomy" id="7227"/>
    <lineage>
        <taxon>Eukaryota</taxon>
        <taxon>Metazoa</taxon>
        <taxon>Ecdysozoa</taxon>
        <taxon>Arthropoda</taxon>
        <taxon>Hexapoda</taxon>
        <taxon>Insecta</taxon>
        <taxon>Pterygota</taxon>
        <taxon>Neoptera</taxon>
        <taxon>Endopterygota</taxon>
        <taxon>Diptera</taxon>
        <taxon>Brachycera</taxon>
        <taxon>Muscomorpha</taxon>
        <taxon>Ephydroidea</taxon>
        <taxon>Drosophilidae</taxon>
        <taxon>Drosophila</taxon>
        <taxon>Sophophora</taxon>
    </lineage>
</organism>
<sequence>MVNKENARSVGQQVKWIGSQDELPPVKNLEHKNVYFYQKCIYGPLTLSVGDFILVSNADAAEPDTVSGCDVARILHMYELRELTDREPCRAIVQWYSWPKAIPHNKYDDDEVAIDFSLEVIEEHRPYDNDVALGAIYRKCIVLEGTSKTSAEEILKRHANKLKSTACPMFVSRYRFVKVKRSYRLIPLEIHLEQPEDNARPTRSSRKSLTAHRESKRSISARHDDTAGNKGSSVEKRRRASMAASSSVEFIDVNSFICENKVSPIKIVGGRSVVRLSEKKNAPEINANYLPASPLTEKNAKVETPKSRASAARRNLNLSLDRGADTTADSDCLNYSIVQQTPDPKTPSNDMKIKLRLSERRRSVRLASMDVDPLSLEEAVQEPNAQGRKRLGVANGDIYHTPTKKSKEPLESAAATEQTPSTRRKSILKSATSRLAEGTPRRSIHLSNIVEQRVFEDDEIISTPKRGRSKKTVQDNDEDYSPKKSVQKTPTRTRRSSTTTKTATTPSKGITTATATPMTPSQKMKKIRAGELSPSMQQRTDLPAKDSSKSELQLAREQLHVSVVPKSLPCREREFENIYAFLEGKIQDQCGGCMYVSGVPGTGKTATVTGVIRTLQRMAKQNELPAFEYLEINGMRLTEPRQAYVQIYKQLTGKTVSWEQAHALLEKRFTTPAPRRVTTVLLVDELDILCNRRQDVVYNLLDWPTKSAAKLVVVTIANTMDLPERLLMGKVTSRLGLTRLTFQPYSHKQLQEIVTARLGGSETFKGEAVQLVARKVAAVSGDARRALDICRRATEIADTAAVKCVTMLHVQQALAEMIASAKVQAIRNCSRMEQIFLQAIAAEVTRTGVEETTFMGVYQQVETIAAFMGVTFPPPGRALRLCSKLGAERLIISEHSRNDLFQKILLNVSADDIHYALRVEEMVN</sequence>
<dbReference type="EMBL" id="AF017647">
    <property type="protein sequence ID" value="AAC47802.1"/>
    <property type="molecule type" value="mRNA"/>
</dbReference>
<dbReference type="EMBL" id="AE013599">
    <property type="protein sequence ID" value="AAF59236.1"/>
    <property type="molecule type" value="Genomic_DNA"/>
</dbReference>
<dbReference type="EMBL" id="AY094780">
    <property type="protein sequence ID" value="AAM11133.1"/>
    <property type="molecule type" value="mRNA"/>
</dbReference>
<dbReference type="RefSeq" id="NP_477303.1">
    <property type="nucleotide sequence ID" value="NM_057955.4"/>
</dbReference>
<dbReference type="PDB" id="4XGC">
    <property type="method" value="X-ray"/>
    <property type="resolution" value="3.50 A"/>
    <property type="chains" value="A=533-924"/>
</dbReference>
<dbReference type="PDB" id="7JGR">
    <property type="method" value="EM"/>
    <property type="resolution" value="3.90 A"/>
    <property type="chains" value="A=440-924"/>
</dbReference>
<dbReference type="PDB" id="7JGS">
    <property type="method" value="EM"/>
    <property type="resolution" value="3.20 A"/>
    <property type="chains" value="A=440-924"/>
</dbReference>
<dbReference type="PDB" id="7JK2">
    <property type="method" value="EM"/>
    <property type="resolution" value="3.20 A"/>
    <property type="chains" value="A=440-924"/>
</dbReference>
<dbReference type="PDB" id="7JK3">
    <property type="method" value="EM"/>
    <property type="resolution" value="3.40 A"/>
    <property type="chains" value="A=440-924"/>
</dbReference>
<dbReference type="PDB" id="7JK4">
    <property type="method" value="EM"/>
    <property type="resolution" value="3.40 A"/>
    <property type="chains" value="A=440-924"/>
</dbReference>
<dbReference type="PDB" id="7JK5">
    <property type="method" value="EM"/>
    <property type="resolution" value="3.90 A"/>
    <property type="chains" value="A=440-924"/>
</dbReference>
<dbReference type="PDB" id="7JK6">
    <property type="method" value="EM"/>
    <property type="resolution" value="4.00 A"/>
    <property type="chains" value="A=440-924"/>
</dbReference>
<dbReference type="PDBsum" id="4XGC"/>
<dbReference type="PDBsum" id="7JGR"/>
<dbReference type="PDBsum" id="7JGS"/>
<dbReference type="PDBsum" id="7JK2"/>
<dbReference type="PDBsum" id="7JK3"/>
<dbReference type="PDBsum" id="7JK4"/>
<dbReference type="PDBsum" id="7JK5"/>
<dbReference type="PDBsum" id="7JK6"/>
<dbReference type="EMDB" id="EMD-22329"/>
<dbReference type="EMDB" id="EMD-22330"/>
<dbReference type="EMDB" id="EMD-22359"/>
<dbReference type="EMDB" id="EMD-22360"/>
<dbReference type="EMDB" id="EMD-22361"/>
<dbReference type="EMDB" id="EMD-22362"/>
<dbReference type="EMDB" id="EMD-22363"/>
<dbReference type="SMR" id="O16810"/>
<dbReference type="BioGRID" id="61562">
    <property type="interactions" value="13"/>
</dbReference>
<dbReference type="ComplexPortal" id="CPX-2369">
    <property type="entry name" value="Nuclear origin recognition complex"/>
</dbReference>
<dbReference type="DIP" id="DIP-59662N"/>
<dbReference type="FunCoup" id="O16810">
    <property type="interactions" value="259"/>
</dbReference>
<dbReference type="IntAct" id="O16810">
    <property type="interactions" value="8"/>
</dbReference>
<dbReference type="MINT" id="O16810"/>
<dbReference type="STRING" id="7227.FBpp0088033"/>
<dbReference type="iPTMnet" id="O16810"/>
<dbReference type="PaxDb" id="7227-FBpp0088033"/>
<dbReference type="DNASU" id="35686"/>
<dbReference type="EnsemblMetazoa" id="FBtr0088959">
    <property type="protein sequence ID" value="FBpp0088033"/>
    <property type="gene ID" value="FBgn0286788"/>
</dbReference>
<dbReference type="GeneID" id="35686"/>
<dbReference type="KEGG" id="dme:Dmel_CG10667"/>
<dbReference type="AGR" id="FB:FBgn0286788"/>
<dbReference type="CTD" id="4998"/>
<dbReference type="FlyBase" id="FBgn0286788">
    <property type="gene designation" value="Orc1"/>
</dbReference>
<dbReference type="VEuPathDB" id="VectorBase:FBgn0286788"/>
<dbReference type="eggNOG" id="KOG1514">
    <property type="taxonomic scope" value="Eukaryota"/>
</dbReference>
<dbReference type="GeneTree" id="ENSGT00530000063498"/>
<dbReference type="HOGENOM" id="CLU_012774_0_1_1"/>
<dbReference type="InParanoid" id="O16810"/>
<dbReference type="OMA" id="KTPSNDM"/>
<dbReference type="OrthoDB" id="1926878at2759"/>
<dbReference type="PhylomeDB" id="O16810"/>
<dbReference type="Reactome" id="R-DME-176187">
    <property type="pathway name" value="Activation of ATR in response to replication stress"/>
</dbReference>
<dbReference type="Reactome" id="R-DME-68616">
    <property type="pathway name" value="Assembly of the ORC complex at the origin of replication"/>
</dbReference>
<dbReference type="Reactome" id="R-DME-68689">
    <property type="pathway name" value="CDC6 association with the ORC:origin complex"/>
</dbReference>
<dbReference type="Reactome" id="R-DME-68949">
    <property type="pathway name" value="Orc1 removal from chromatin"/>
</dbReference>
<dbReference type="Reactome" id="R-DME-68962">
    <property type="pathway name" value="Activation of the pre-replicative complex"/>
</dbReference>
<dbReference type="SignaLink" id="O16810"/>
<dbReference type="BioGRID-ORCS" id="35686">
    <property type="hits" value="1 hit in 3 CRISPR screens"/>
</dbReference>
<dbReference type="CD-CODE" id="19512460">
    <property type="entry name" value="Synthetic Condensate 000336"/>
</dbReference>
<dbReference type="CD-CODE" id="28DCC277">
    <property type="entry name" value="Synthetic Condensate 000327"/>
</dbReference>
<dbReference type="CD-CODE" id="477BAC9B">
    <property type="entry name" value="Synthetic Condensate 000340"/>
</dbReference>
<dbReference type="EvolutionaryTrace" id="O16810"/>
<dbReference type="GenomeRNAi" id="35686"/>
<dbReference type="PRO" id="PR:O16810"/>
<dbReference type="Proteomes" id="UP000000803">
    <property type="component" value="Chromosome 2R"/>
</dbReference>
<dbReference type="Bgee" id="FBgn0286788">
    <property type="expression patterns" value="Expressed in egg cell and 27 other cell types or tissues"/>
</dbReference>
<dbReference type="GO" id="GO:0005664">
    <property type="term" value="C:nuclear origin of replication recognition complex"/>
    <property type="evidence" value="ECO:0000314"/>
    <property type="project" value="FlyBase"/>
</dbReference>
<dbReference type="GO" id="GO:0005634">
    <property type="term" value="C:nucleus"/>
    <property type="evidence" value="ECO:0000314"/>
    <property type="project" value="UniProtKB"/>
</dbReference>
<dbReference type="GO" id="GO:0005524">
    <property type="term" value="F:ATP binding"/>
    <property type="evidence" value="ECO:0007669"/>
    <property type="project" value="UniProtKB-KW"/>
</dbReference>
<dbReference type="GO" id="GO:0016887">
    <property type="term" value="F:ATP hydrolysis activity"/>
    <property type="evidence" value="ECO:0007669"/>
    <property type="project" value="InterPro"/>
</dbReference>
<dbReference type="GO" id="GO:0003682">
    <property type="term" value="F:chromatin binding"/>
    <property type="evidence" value="ECO:0007669"/>
    <property type="project" value="InterPro"/>
</dbReference>
<dbReference type="GO" id="GO:0003688">
    <property type="term" value="F:DNA replication origin binding"/>
    <property type="evidence" value="ECO:0000318"/>
    <property type="project" value="GO_Central"/>
</dbReference>
<dbReference type="GO" id="GO:0046872">
    <property type="term" value="F:metal ion binding"/>
    <property type="evidence" value="ECO:0007669"/>
    <property type="project" value="UniProtKB-KW"/>
</dbReference>
<dbReference type="GO" id="GO:0006277">
    <property type="term" value="P:DNA amplification"/>
    <property type="evidence" value="ECO:0000315"/>
    <property type="project" value="FlyBase"/>
</dbReference>
<dbReference type="GO" id="GO:0006270">
    <property type="term" value="P:DNA replication initiation"/>
    <property type="evidence" value="ECO:0000314"/>
    <property type="project" value="FlyBase"/>
</dbReference>
<dbReference type="GO" id="GO:0033314">
    <property type="term" value="P:mitotic DNA replication checkpoint signaling"/>
    <property type="evidence" value="ECO:0000318"/>
    <property type="project" value="GO_Central"/>
</dbReference>
<dbReference type="CDD" id="cd00009">
    <property type="entry name" value="AAA"/>
    <property type="match status" value="1"/>
</dbReference>
<dbReference type="CDD" id="cd04719">
    <property type="entry name" value="BAH_Orc1p_animal"/>
    <property type="match status" value="1"/>
</dbReference>
<dbReference type="CDD" id="cd08768">
    <property type="entry name" value="Cdc6_C"/>
    <property type="match status" value="1"/>
</dbReference>
<dbReference type="FunFam" id="1.10.8.60:FF:000206">
    <property type="entry name" value="Origin recognition complex subunit 1"/>
    <property type="match status" value="1"/>
</dbReference>
<dbReference type="FunFam" id="3.40.50.300:FF:000199">
    <property type="entry name" value="Origin recognition complex subunit 1"/>
    <property type="match status" value="1"/>
</dbReference>
<dbReference type="Gene3D" id="1.10.8.60">
    <property type="match status" value="1"/>
</dbReference>
<dbReference type="Gene3D" id="2.30.30.490">
    <property type="match status" value="1"/>
</dbReference>
<dbReference type="Gene3D" id="3.40.50.300">
    <property type="entry name" value="P-loop containing nucleotide triphosphate hydrolases"/>
    <property type="match status" value="1"/>
</dbReference>
<dbReference type="InterPro" id="IPR003593">
    <property type="entry name" value="AAA+_ATPase"/>
</dbReference>
<dbReference type="InterPro" id="IPR041083">
    <property type="entry name" value="AAA_lid_10"/>
</dbReference>
<dbReference type="InterPro" id="IPR003959">
    <property type="entry name" value="ATPase_AAA_core"/>
</dbReference>
<dbReference type="InterPro" id="IPR001025">
    <property type="entry name" value="BAH_dom"/>
</dbReference>
<dbReference type="InterPro" id="IPR043151">
    <property type="entry name" value="BAH_sf"/>
</dbReference>
<dbReference type="InterPro" id="IPR015163">
    <property type="entry name" value="Cdc6_C"/>
</dbReference>
<dbReference type="InterPro" id="IPR050311">
    <property type="entry name" value="ORC1/CDC6"/>
</dbReference>
<dbReference type="InterPro" id="IPR027417">
    <property type="entry name" value="P-loop_NTPase"/>
</dbReference>
<dbReference type="PANTHER" id="PTHR10763">
    <property type="entry name" value="CELL DIVISION CONTROL PROTEIN 6-RELATED"/>
    <property type="match status" value="1"/>
</dbReference>
<dbReference type="PANTHER" id="PTHR10763:SF23">
    <property type="entry name" value="ORIGIN RECOGNITION COMPLEX SUBUNIT 1"/>
    <property type="match status" value="1"/>
</dbReference>
<dbReference type="Pfam" id="PF00004">
    <property type="entry name" value="AAA"/>
    <property type="match status" value="1"/>
</dbReference>
<dbReference type="Pfam" id="PF17872">
    <property type="entry name" value="AAA_lid_10"/>
    <property type="match status" value="1"/>
</dbReference>
<dbReference type="Pfam" id="PF01426">
    <property type="entry name" value="BAH"/>
    <property type="match status" value="1"/>
</dbReference>
<dbReference type="Pfam" id="PF09079">
    <property type="entry name" value="Cdc6_C"/>
    <property type="match status" value="1"/>
</dbReference>
<dbReference type="SMART" id="SM00382">
    <property type="entry name" value="AAA"/>
    <property type="match status" value="1"/>
</dbReference>
<dbReference type="SMART" id="SM00439">
    <property type="entry name" value="BAH"/>
    <property type="match status" value="1"/>
</dbReference>
<dbReference type="SMART" id="SM01074">
    <property type="entry name" value="Cdc6_C"/>
    <property type="match status" value="1"/>
</dbReference>
<dbReference type="SUPFAM" id="SSF52540">
    <property type="entry name" value="P-loop containing nucleoside triphosphate hydrolases"/>
    <property type="match status" value="1"/>
</dbReference>
<dbReference type="PROSITE" id="PS51038">
    <property type="entry name" value="BAH"/>
    <property type="match status" value="1"/>
</dbReference>
<proteinExistence type="evidence at protein level"/>
<keyword id="KW-0002">3D-structure</keyword>
<keyword id="KW-0067">ATP-binding</keyword>
<keyword id="KW-0235">DNA replication</keyword>
<keyword id="KW-0238">DNA-binding</keyword>
<keyword id="KW-0460">Magnesium</keyword>
<keyword id="KW-0479">Metal-binding</keyword>
<keyword id="KW-0547">Nucleotide-binding</keyword>
<keyword id="KW-0539">Nucleus</keyword>
<keyword id="KW-0597">Phosphoprotein</keyword>
<keyword id="KW-1185">Reference proteome</keyword>
<accession>O16810</accession>
<accession>Q9V4N1</accession>
<evidence type="ECO:0000250" key="1"/>
<evidence type="ECO:0000250" key="2">
    <source>
        <dbReference type="UniProtKB" id="Q13415"/>
    </source>
</evidence>
<evidence type="ECO:0000255" key="3">
    <source>
        <dbReference type="PROSITE-ProRule" id="PRU00370"/>
    </source>
</evidence>
<evidence type="ECO:0000256" key="4">
    <source>
        <dbReference type="SAM" id="MobiDB-lite"/>
    </source>
</evidence>
<evidence type="ECO:0000269" key="5">
    <source>
    </source>
</evidence>
<evidence type="ECO:0000269" key="6">
    <source>
    </source>
</evidence>
<evidence type="ECO:0000269" key="7">
    <source>
    </source>
</evidence>
<evidence type="ECO:0000305" key="8"/>
<evidence type="ECO:0007829" key="9">
    <source>
        <dbReference type="PDB" id="4XGC"/>
    </source>
</evidence>
<evidence type="ECO:0007829" key="10">
    <source>
        <dbReference type="PDB" id="7JGS"/>
    </source>
</evidence>
<evidence type="ECO:0007829" key="11">
    <source>
        <dbReference type="PDB" id="7JK3"/>
    </source>
</evidence>
<evidence type="ECO:0007829" key="12">
    <source>
        <dbReference type="PDB" id="7JK4"/>
    </source>
</evidence>
<comment type="function">
    <text evidence="7">Component of the origin recognition complex (ORC) that binds origins of replication. DNA-binding is ATP-dependent, however specific DNA sequences that define origins of replication have not been identified so far. ORC is required to assemble the pre-replication complex necessary to initiate DNA replication.</text>
</comment>
<comment type="subunit">
    <text evidence="1">ORC is composed of six subunits.</text>
</comment>
<comment type="subcellular location">
    <subcellularLocation>
        <location evidence="1">Nucleus</location>
    </subcellularLocation>
</comment>
<comment type="similarity">
    <text evidence="8">Belongs to the ORC1 family.</text>
</comment>
<feature type="chain" id="PRO_0000127069" description="Origin recognition complex subunit 1">
    <location>
        <begin position="1"/>
        <end position="924"/>
    </location>
</feature>
<feature type="domain" description="BAH" evidence="3">
    <location>
        <begin position="45"/>
        <end position="187"/>
    </location>
</feature>
<feature type="region of interest" description="Disordered" evidence="4">
    <location>
        <begin position="196"/>
        <end position="239"/>
    </location>
</feature>
<feature type="region of interest" description="Disordered" evidence="4">
    <location>
        <begin position="377"/>
        <end position="440"/>
    </location>
</feature>
<feature type="region of interest" description="Disordered" evidence="4">
    <location>
        <begin position="460"/>
        <end position="523"/>
    </location>
</feature>
<feature type="compositionally biased region" description="Basic and acidic residues" evidence="4">
    <location>
        <begin position="211"/>
        <end position="227"/>
    </location>
</feature>
<feature type="compositionally biased region" description="Low complexity" evidence="4">
    <location>
        <begin position="496"/>
        <end position="516"/>
    </location>
</feature>
<feature type="binding site" evidence="2">
    <location>
        <position position="564"/>
    </location>
    <ligand>
        <name>ATP</name>
        <dbReference type="ChEBI" id="CHEBI:30616"/>
    </ligand>
</feature>
<feature type="binding site" evidence="2">
    <location>
        <begin position="598"/>
        <end position="606"/>
    </location>
    <ligand>
        <name>ATP</name>
        <dbReference type="ChEBI" id="CHEBI:30616"/>
    </ligand>
</feature>
<feature type="binding site" evidence="2">
    <location>
        <position position="684"/>
    </location>
    <ligand>
        <name>Mg(2+)</name>
        <dbReference type="ChEBI" id="CHEBI:18420"/>
    </ligand>
</feature>
<feature type="binding site" evidence="2">
    <location>
        <position position="685"/>
    </location>
    <ligand>
        <name>ATP</name>
        <dbReference type="ChEBI" id="CHEBI:30616"/>
    </ligand>
</feature>
<feature type="binding site" evidence="2">
    <location>
        <position position="685"/>
    </location>
    <ligand>
        <name>Mg(2+)</name>
        <dbReference type="ChEBI" id="CHEBI:18420"/>
    </ligand>
</feature>
<feature type="binding site" evidence="2">
    <location>
        <position position="718"/>
    </location>
    <ligand>
        <name>ATP</name>
        <dbReference type="ChEBI" id="CHEBI:30616"/>
    </ligand>
</feature>
<feature type="binding site" evidence="2">
    <location>
        <position position="784"/>
    </location>
    <ligand>
        <name>ATP</name>
        <dbReference type="ChEBI" id="CHEBI:30616"/>
    </ligand>
</feature>
<feature type="modified residue" description="Phosphoserine" evidence="6">
    <location>
        <position position="293"/>
    </location>
</feature>
<feature type="modified residue" description="Phosphoserine" evidence="5">
    <location>
        <position position="368"/>
    </location>
</feature>
<feature type="modified residue" description="Phosphothreonine" evidence="6">
    <location>
        <position position="419"/>
    </location>
</feature>
<feature type="modified residue" description="Phosphoserine" evidence="6">
    <location>
        <position position="426"/>
    </location>
</feature>
<feature type="modified residue" description="Phosphoserine" evidence="6">
    <location>
        <position position="430"/>
    </location>
</feature>
<feature type="modified residue" description="Phosphoserine" evidence="6">
    <location>
        <position position="533"/>
    </location>
</feature>
<feature type="sequence conflict" description="In Ref. 1; AAC47802." evidence="8" ref="1">
    <original>A</original>
    <variation>S</variation>
    <location>
        <position position="159"/>
    </location>
</feature>
<feature type="helix" evidence="10">
    <location>
        <begin position="520"/>
        <end position="528"/>
    </location>
</feature>
<feature type="helix" evidence="10">
    <location>
        <begin position="546"/>
        <end position="548"/>
    </location>
</feature>
<feature type="helix" evidence="10">
    <location>
        <begin position="551"/>
        <end position="558"/>
    </location>
</feature>
<feature type="helix" evidence="10">
    <location>
        <begin position="572"/>
        <end position="588"/>
    </location>
</feature>
<feature type="strand" evidence="10">
    <location>
        <begin position="592"/>
        <end position="599"/>
    </location>
</feature>
<feature type="helix" evidence="9">
    <location>
        <begin position="600"/>
        <end position="602"/>
    </location>
</feature>
<feature type="helix" evidence="10">
    <location>
        <begin position="604"/>
        <end position="620"/>
    </location>
</feature>
<feature type="strand" evidence="10">
    <location>
        <begin position="627"/>
        <end position="633"/>
    </location>
</feature>
<feature type="helix" evidence="10">
    <location>
        <begin position="634"/>
        <end position="636"/>
    </location>
</feature>
<feature type="helix" evidence="10">
    <location>
        <begin position="640"/>
        <end position="642"/>
    </location>
</feature>
<feature type="helix" evidence="10">
    <location>
        <begin position="643"/>
        <end position="649"/>
    </location>
</feature>
<feature type="turn" evidence="10">
    <location>
        <begin position="650"/>
        <end position="652"/>
    </location>
</feature>
<feature type="helix" evidence="10">
    <location>
        <begin position="658"/>
        <end position="669"/>
    </location>
</feature>
<feature type="strand" evidence="10">
    <location>
        <begin position="678"/>
        <end position="684"/>
    </location>
</feature>
<feature type="helix" evidence="10">
    <location>
        <begin position="686"/>
        <end position="689"/>
    </location>
</feature>
<feature type="turn" evidence="12">
    <location>
        <begin position="691"/>
        <end position="693"/>
    </location>
</feature>
<feature type="helix" evidence="10">
    <location>
        <begin position="696"/>
        <end position="702"/>
    </location>
</feature>
<feature type="helix" evidence="10">
    <location>
        <begin position="703"/>
        <end position="705"/>
    </location>
</feature>
<feature type="strand" evidence="11">
    <location>
        <begin position="706"/>
        <end position="708"/>
    </location>
</feature>
<feature type="strand" evidence="10">
    <location>
        <begin position="711"/>
        <end position="718"/>
    </location>
</feature>
<feature type="helix" evidence="10">
    <location>
        <begin position="722"/>
        <end position="725"/>
    </location>
</feature>
<feature type="helix" evidence="10">
    <location>
        <begin position="729"/>
        <end position="735"/>
    </location>
</feature>
<feature type="strand" evidence="10">
    <location>
        <begin position="739"/>
        <end position="742"/>
    </location>
</feature>
<feature type="helix" evidence="10">
    <location>
        <begin position="747"/>
        <end position="758"/>
    </location>
</feature>
<feature type="strand" evidence="11">
    <location>
        <begin position="762"/>
        <end position="764"/>
    </location>
</feature>
<feature type="helix" evidence="10">
    <location>
        <begin position="766"/>
        <end position="776"/>
    </location>
</feature>
<feature type="turn" evidence="10">
    <location>
        <begin position="777"/>
        <end position="780"/>
    </location>
</feature>
<feature type="helix" evidence="10">
    <location>
        <begin position="783"/>
        <end position="799"/>
    </location>
</feature>
<feature type="strand" evidence="10">
    <location>
        <begin position="803"/>
        <end position="805"/>
    </location>
</feature>
<feature type="helix" evidence="10">
    <location>
        <begin position="807"/>
        <end position="817"/>
    </location>
</feature>
<feature type="helix" evidence="10">
    <location>
        <begin position="823"/>
        <end position="827"/>
    </location>
</feature>
<feature type="helix" evidence="10">
    <location>
        <begin position="831"/>
        <end position="847"/>
    </location>
</feature>
<feature type="strand" evidence="11">
    <location>
        <begin position="848"/>
        <end position="850"/>
    </location>
</feature>
<feature type="helix" evidence="10">
    <location>
        <begin position="854"/>
        <end position="868"/>
    </location>
</feature>
<feature type="helix" evidence="10">
    <location>
        <begin position="875"/>
        <end position="887"/>
    </location>
</feature>
<feature type="strand" evidence="10">
    <location>
        <begin position="890"/>
        <end position="892"/>
    </location>
</feature>
<feature type="turn" evidence="10">
    <location>
        <begin position="899"/>
        <end position="901"/>
    </location>
</feature>
<feature type="strand" evidence="10">
    <location>
        <begin position="903"/>
        <end position="906"/>
    </location>
</feature>
<feature type="helix" evidence="10">
    <location>
        <begin position="910"/>
        <end position="917"/>
    </location>
</feature>